<proteinExistence type="inferred from homology"/>
<dbReference type="EMBL" id="EF489041">
    <property type="protein sequence ID" value="ABO36702.1"/>
    <property type="molecule type" value="Genomic_DNA"/>
</dbReference>
<dbReference type="RefSeq" id="YP_001109499.1">
    <property type="nucleotide sequence ID" value="NC_009143.1"/>
</dbReference>
<dbReference type="SMR" id="A4GYQ8"/>
<dbReference type="FunCoup" id="A4GYQ8">
    <property type="interactions" value="63"/>
</dbReference>
<dbReference type="STRING" id="3694.A4GYQ8"/>
<dbReference type="EnsemblPlants" id="Potri.013G142336.1.v4.1">
    <property type="protein sequence ID" value="Potri.013G142336.1.v4.1"/>
    <property type="gene ID" value="Potri.013G142336.v4.1"/>
</dbReference>
<dbReference type="GeneID" id="4929661"/>
<dbReference type="Gramene" id="Potri.013G142336.1.v4.1">
    <property type="protein sequence ID" value="Potri.013G142336.1.v4.1"/>
    <property type="gene ID" value="Potri.013G142336.v4.1"/>
</dbReference>
<dbReference type="KEGG" id="pop:4929661"/>
<dbReference type="InParanoid" id="A4GYQ8"/>
<dbReference type="OMA" id="RPRANYL"/>
<dbReference type="OrthoDB" id="413436at2759"/>
<dbReference type="Proteomes" id="UP000006729">
    <property type="component" value="Chloroplast"/>
</dbReference>
<dbReference type="GO" id="GO:0009507">
    <property type="term" value="C:chloroplast"/>
    <property type="evidence" value="ECO:0007669"/>
    <property type="project" value="UniProtKB-SubCell"/>
</dbReference>
<dbReference type="GO" id="GO:0015935">
    <property type="term" value="C:small ribosomal subunit"/>
    <property type="evidence" value="ECO:0000318"/>
    <property type="project" value="GO_Central"/>
</dbReference>
<dbReference type="GO" id="GO:0019843">
    <property type="term" value="F:rRNA binding"/>
    <property type="evidence" value="ECO:0007669"/>
    <property type="project" value="UniProtKB-UniRule"/>
</dbReference>
<dbReference type="GO" id="GO:0003735">
    <property type="term" value="F:structural constituent of ribosome"/>
    <property type="evidence" value="ECO:0000318"/>
    <property type="project" value="GO_Central"/>
</dbReference>
<dbReference type="GO" id="GO:0006412">
    <property type="term" value="P:translation"/>
    <property type="evidence" value="ECO:0000318"/>
    <property type="project" value="GO_Central"/>
</dbReference>
<dbReference type="FunFam" id="1.10.287.1480:FF:000001">
    <property type="entry name" value="30S ribosomal protein S14"/>
    <property type="match status" value="1"/>
</dbReference>
<dbReference type="Gene3D" id="1.10.287.1480">
    <property type="match status" value="1"/>
</dbReference>
<dbReference type="HAMAP" id="MF_00537">
    <property type="entry name" value="Ribosomal_uS14_1"/>
    <property type="match status" value="1"/>
</dbReference>
<dbReference type="InterPro" id="IPR001209">
    <property type="entry name" value="Ribosomal_uS14"/>
</dbReference>
<dbReference type="InterPro" id="IPR023036">
    <property type="entry name" value="Ribosomal_uS14_bac/plastid"/>
</dbReference>
<dbReference type="InterPro" id="IPR018271">
    <property type="entry name" value="Ribosomal_uS14_CS"/>
</dbReference>
<dbReference type="NCBIfam" id="NF006477">
    <property type="entry name" value="PRK08881.1"/>
    <property type="match status" value="1"/>
</dbReference>
<dbReference type="PANTHER" id="PTHR19836">
    <property type="entry name" value="30S RIBOSOMAL PROTEIN S14"/>
    <property type="match status" value="1"/>
</dbReference>
<dbReference type="PANTHER" id="PTHR19836:SF19">
    <property type="entry name" value="SMALL RIBOSOMAL SUBUNIT PROTEIN US14M"/>
    <property type="match status" value="1"/>
</dbReference>
<dbReference type="Pfam" id="PF00253">
    <property type="entry name" value="Ribosomal_S14"/>
    <property type="match status" value="1"/>
</dbReference>
<dbReference type="SUPFAM" id="SSF57716">
    <property type="entry name" value="Glucocorticoid receptor-like (DNA-binding domain)"/>
    <property type="match status" value="1"/>
</dbReference>
<dbReference type="PROSITE" id="PS00527">
    <property type="entry name" value="RIBOSOMAL_S14"/>
    <property type="match status" value="1"/>
</dbReference>
<accession>A4GYQ8</accession>
<name>RR14_POPTR</name>
<organism>
    <name type="scientific">Populus trichocarpa</name>
    <name type="common">Western balsam poplar</name>
    <name type="synonym">Populus balsamifera subsp. trichocarpa</name>
    <dbReference type="NCBI Taxonomy" id="3694"/>
    <lineage>
        <taxon>Eukaryota</taxon>
        <taxon>Viridiplantae</taxon>
        <taxon>Streptophyta</taxon>
        <taxon>Embryophyta</taxon>
        <taxon>Tracheophyta</taxon>
        <taxon>Spermatophyta</taxon>
        <taxon>Magnoliopsida</taxon>
        <taxon>eudicotyledons</taxon>
        <taxon>Gunneridae</taxon>
        <taxon>Pentapetalae</taxon>
        <taxon>rosids</taxon>
        <taxon>fabids</taxon>
        <taxon>Malpighiales</taxon>
        <taxon>Salicaceae</taxon>
        <taxon>Saliceae</taxon>
        <taxon>Populus</taxon>
    </lineage>
</organism>
<protein>
    <recommendedName>
        <fullName evidence="1">Small ribosomal subunit protein uS14c</fullName>
    </recommendedName>
    <alternativeName>
        <fullName evidence="2">30S ribosomal protein S14, chloroplastic</fullName>
    </alternativeName>
</protein>
<geneLocation type="chloroplast"/>
<feature type="chain" id="PRO_0000354437" description="Small ribosomal subunit protein uS14c">
    <location>
        <begin position="1"/>
        <end position="100"/>
    </location>
</feature>
<keyword id="KW-0150">Chloroplast</keyword>
<keyword id="KW-0934">Plastid</keyword>
<keyword id="KW-1185">Reference proteome</keyword>
<keyword id="KW-0687">Ribonucleoprotein</keyword>
<keyword id="KW-0689">Ribosomal protein</keyword>
<keyword id="KW-0694">RNA-binding</keyword>
<keyword id="KW-0699">rRNA-binding</keyword>
<sequence>MARKSLIQREKKRQKLEQKYHLIRRSSKKEISKVPSLSDKWEIHGKLQSPPRNSAPTRLHRRCFLTGRPRANYRDFGLSGHILRAKVHACLLPGATRSSW</sequence>
<reference key="1">
    <citation type="journal article" date="2006" name="Science">
        <title>The genome of black cottonwood, Populus trichocarpa (Torr. &amp; Gray).</title>
        <authorList>
            <person name="Tuskan G.A."/>
            <person name="Difazio S."/>
            <person name="Jansson S."/>
            <person name="Bohlmann J."/>
            <person name="Grigoriev I."/>
            <person name="Hellsten U."/>
            <person name="Putnam N."/>
            <person name="Ralph S."/>
            <person name="Rombauts S."/>
            <person name="Salamov A."/>
            <person name="Schein J."/>
            <person name="Sterck L."/>
            <person name="Aerts A."/>
            <person name="Bhalerao R.R."/>
            <person name="Bhalerao R.P."/>
            <person name="Blaudez D."/>
            <person name="Boerjan W."/>
            <person name="Brun A."/>
            <person name="Brunner A."/>
            <person name="Busov V."/>
            <person name="Campbell M."/>
            <person name="Carlson J."/>
            <person name="Chalot M."/>
            <person name="Chapman J."/>
            <person name="Chen G.-L."/>
            <person name="Cooper D."/>
            <person name="Coutinho P.M."/>
            <person name="Couturier J."/>
            <person name="Covert S."/>
            <person name="Cronk Q."/>
            <person name="Cunningham R."/>
            <person name="Davis J."/>
            <person name="Degroeve S."/>
            <person name="Dejardin A."/>
            <person name="dePamphilis C.W."/>
            <person name="Detter J."/>
            <person name="Dirks B."/>
            <person name="Dubchak I."/>
            <person name="Duplessis S."/>
            <person name="Ehlting J."/>
            <person name="Ellis B."/>
            <person name="Gendler K."/>
            <person name="Goodstein D."/>
            <person name="Gribskov M."/>
            <person name="Grimwood J."/>
            <person name="Groover A."/>
            <person name="Gunter L."/>
            <person name="Hamberger B."/>
            <person name="Heinze B."/>
            <person name="Helariutta Y."/>
            <person name="Henrissat B."/>
            <person name="Holligan D."/>
            <person name="Holt R."/>
            <person name="Huang W."/>
            <person name="Islam-Faridi N."/>
            <person name="Jones S."/>
            <person name="Jones-Rhoades M."/>
            <person name="Jorgensen R."/>
            <person name="Joshi C."/>
            <person name="Kangasjaervi J."/>
            <person name="Karlsson J."/>
            <person name="Kelleher C."/>
            <person name="Kirkpatrick R."/>
            <person name="Kirst M."/>
            <person name="Kohler A."/>
            <person name="Kalluri U."/>
            <person name="Larimer F."/>
            <person name="Leebens-Mack J."/>
            <person name="Leple J.-C."/>
            <person name="Locascio P."/>
            <person name="Lou Y."/>
            <person name="Lucas S."/>
            <person name="Martin F."/>
            <person name="Montanini B."/>
            <person name="Napoli C."/>
            <person name="Nelson D.R."/>
            <person name="Nelson C."/>
            <person name="Nieminen K."/>
            <person name="Nilsson O."/>
            <person name="Pereda V."/>
            <person name="Peter G."/>
            <person name="Philippe R."/>
            <person name="Pilate G."/>
            <person name="Poliakov A."/>
            <person name="Razumovskaya J."/>
            <person name="Richardson P."/>
            <person name="Rinaldi C."/>
            <person name="Ritland K."/>
            <person name="Rouze P."/>
            <person name="Ryaboy D."/>
            <person name="Schmutz J."/>
            <person name="Schrader J."/>
            <person name="Segerman B."/>
            <person name="Shin H."/>
            <person name="Siddiqui A."/>
            <person name="Sterky F."/>
            <person name="Terry A."/>
            <person name="Tsai C.-J."/>
            <person name="Uberbacher E."/>
            <person name="Unneberg P."/>
            <person name="Vahala J."/>
            <person name="Wall K."/>
            <person name="Wessler S."/>
            <person name="Yang G."/>
            <person name="Yin T."/>
            <person name="Douglas C."/>
            <person name="Marra M."/>
            <person name="Sandberg G."/>
            <person name="Van de Peer Y."/>
            <person name="Rokhsar D.S."/>
        </authorList>
    </citation>
    <scope>NUCLEOTIDE SEQUENCE [LARGE SCALE GENOMIC DNA]</scope>
    <source>
        <strain>cv. Nisqually</strain>
    </source>
</reference>
<comment type="function">
    <text evidence="1">Binds 16S rRNA, required for the assembly of 30S particles.</text>
</comment>
<comment type="subunit">
    <text evidence="1">Part of the 30S ribosomal subunit.</text>
</comment>
<comment type="subcellular location">
    <subcellularLocation>
        <location>Plastid</location>
        <location>Chloroplast</location>
    </subcellularLocation>
</comment>
<comment type="similarity">
    <text evidence="1">Belongs to the universal ribosomal protein uS14 family.</text>
</comment>
<evidence type="ECO:0000255" key="1">
    <source>
        <dbReference type="HAMAP-Rule" id="MF_00537"/>
    </source>
</evidence>
<evidence type="ECO:0000305" key="2"/>
<gene>
    <name evidence="1" type="primary">rps14</name>
    <name type="ordered locus">Poptr_cp020</name>
</gene>